<evidence type="ECO:0000250" key="1">
    <source>
        <dbReference type="UniProtKB" id="Q8CTG7"/>
    </source>
</evidence>
<evidence type="ECO:0000250" key="2">
    <source>
        <dbReference type="UniProtKB" id="Q97JQ5"/>
    </source>
</evidence>
<evidence type="ECO:0000305" key="3"/>
<sequence length="202" mass="23422">MGTRWFAKNTTMSKNSIVIGVDLDGVCADFYGRMRQIASEWFERPIDELPEEVSWGLSEWGITNPSQYDSLHRFAVTQRELFSSMEAIPGARKYLRQLSDEGFRIRIITHRLFIHYFHATAVQQTVNWLDSHGIPYWDLCFVKEKTQVGADIYIEDSPENVAQLRGRGLFTICFGNSTNRHIEELRAASWQDVYDMIKAFVT</sequence>
<dbReference type="EC" id="3.1.3.-"/>
<dbReference type="EMBL" id="AE006470">
    <property type="protein sequence ID" value="AAM72446.1"/>
    <property type="molecule type" value="Genomic_DNA"/>
</dbReference>
<dbReference type="RefSeq" id="NP_662104.1">
    <property type="nucleotide sequence ID" value="NC_002932.3"/>
</dbReference>
<dbReference type="SMR" id="Q8KD41"/>
<dbReference type="STRING" id="194439.CT1214"/>
<dbReference type="DNASU" id="1006574"/>
<dbReference type="EnsemblBacteria" id="AAM72446">
    <property type="protein sequence ID" value="AAM72446"/>
    <property type="gene ID" value="CT1214"/>
</dbReference>
<dbReference type="KEGG" id="cte:CT1214"/>
<dbReference type="PATRIC" id="fig|194439.7.peg.1109"/>
<dbReference type="eggNOG" id="COG4502">
    <property type="taxonomic scope" value="Bacteria"/>
</dbReference>
<dbReference type="HOGENOM" id="CLU_1352634_0_0_10"/>
<dbReference type="OrthoDB" id="954467at2"/>
<dbReference type="Proteomes" id="UP000001007">
    <property type="component" value="Chromosome"/>
</dbReference>
<dbReference type="GO" id="GO:0008253">
    <property type="term" value="F:5'-nucleotidase activity"/>
    <property type="evidence" value="ECO:0007669"/>
    <property type="project" value="InterPro"/>
</dbReference>
<dbReference type="GO" id="GO:0046872">
    <property type="term" value="F:metal ion binding"/>
    <property type="evidence" value="ECO:0007669"/>
    <property type="project" value="UniProtKB-KW"/>
</dbReference>
<dbReference type="GO" id="GO:0009223">
    <property type="term" value="P:pyrimidine deoxyribonucleotide catabolic process"/>
    <property type="evidence" value="ECO:0007669"/>
    <property type="project" value="TreeGrafter"/>
</dbReference>
<dbReference type="CDD" id="cd02587">
    <property type="entry name" value="HAD_5-3dNT"/>
    <property type="match status" value="1"/>
</dbReference>
<dbReference type="Gene3D" id="3.40.50.1000">
    <property type="entry name" value="HAD superfamily/HAD-like"/>
    <property type="match status" value="1"/>
</dbReference>
<dbReference type="InterPro" id="IPR010708">
    <property type="entry name" value="5'(3')-deoxyribonucleotidase"/>
</dbReference>
<dbReference type="InterPro" id="IPR036412">
    <property type="entry name" value="HAD-like_sf"/>
</dbReference>
<dbReference type="InterPro" id="IPR023214">
    <property type="entry name" value="HAD_sf"/>
</dbReference>
<dbReference type="PANTHER" id="PTHR16504">
    <property type="entry name" value="5'(3')-DEOXYRIBONUCLEOTIDASE"/>
    <property type="match status" value="1"/>
</dbReference>
<dbReference type="PANTHER" id="PTHR16504:SF4">
    <property type="entry name" value="5'(3')-DEOXYRIBONUCLEOTIDASE"/>
    <property type="match status" value="1"/>
</dbReference>
<dbReference type="Pfam" id="PF06941">
    <property type="entry name" value="NT5C"/>
    <property type="match status" value="1"/>
</dbReference>
<dbReference type="SUPFAM" id="SSF56784">
    <property type="entry name" value="HAD-like"/>
    <property type="match status" value="1"/>
</dbReference>
<feature type="chain" id="PRO_0000164379" description="Putative 5'(3')-deoxyribonucleotidase">
    <location>
        <begin position="1"/>
        <end position="202"/>
    </location>
</feature>
<feature type="active site" description="Nucleophile" evidence="3">
    <location>
        <position position="22"/>
    </location>
</feature>
<feature type="active site" description="Proton donor" evidence="3">
    <location>
        <position position="24"/>
    </location>
</feature>
<feature type="binding site" evidence="1">
    <location>
        <position position="22"/>
    </location>
    <ligand>
        <name>Mg(2+)</name>
        <dbReference type="ChEBI" id="CHEBI:18420"/>
    </ligand>
</feature>
<feature type="binding site" evidence="1">
    <location>
        <position position="24"/>
    </location>
    <ligand>
        <name>Mg(2+)</name>
        <dbReference type="ChEBI" id="CHEBI:18420"/>
    </ligand>
</feature>
<feature type="binding site" evidence="1">
    <location>
        <position position="156"/>
    </location>
    <ligand>
        <name>Mg(2+)</name>
        <dbReference type="ChEBI" id="CHEBI:18420"/>
    </ligand>
</feature>
<proteinExistence type="inferred from homology"/>
<name>53DR_CHLTE</name>
<protein>
    <recommendedName>
        <fullName>Putative 5'(3')-deoxyribonucleotidase</fullName>
        <ecNumber>3.1.3.-</ecNumber>
    </recommendedName>
</protein>
<accession>Q8KD41</accession>
<comment type="function">
    <text evidence="3">Dephosphorylates the 5' and 2'(3')-phosphates of deoxyribonucleotides.</text>
</comment>
<comment type="cofactor">
    <cofactor evidence="2">
        <name>Mg(2+)</name>
        <dbReference type="ChEBI" id="CHEBI:18420"/>
    </cofactor>
</comment>
<comment type="similarity">
    <text evidence="3">Belongs to the 5'(3')-deoxyribonucleotidase family.</text>
</comment>
<organism>
    <name type="scientific">Chlorobaculum tepidum (strain ATCC 49652 / DSM 12025 / NBRC 103806 / TLS)</name>
    <name type="common">Chlorobium tepidum</name>
    <dbReference type="NCBI Taxonomy" id="194439"/>
    <lineage>
        <taxon>Bacteria</taxon>
        <taxon>Pseudomonadati</taxon>
        <taxon>Chlorobiota</taxon>
        <taxon>Chlorobiia</taxon>
        <taxon>Chlorobiales</taxon>
        <taxon>Chlorobiaceae</taxon>
        <taxon>Chlorobaculum</taxon>
    </lineage>
</organism>
<reference key="1">
    <citation type="journal article" date="2002" name="Proc. Natl. Acad. Sci. U.S.A.">
        <title>The complete genome sequence of Chlorobium tepidum TLS, a photosynthetic, anaerobic, green-sulfur bacterium.</title>
        <authorList>
            <person name="Eisen J.A."/>
            <person name="Nelson K.E."/>
            <person name="Paulsen I.T."/>
            <person name="Heidelberg J.F."/>
            <person name="Wu M."/>
            <person name="Dodson R.J."/>
            <person name="DeBoy R.T."/>
            <person name="Gwinn M.L."/>
            <person name="Nelson W.C."/>
            <person name="Haft D.H."/>
            <person name="Hickey E.K."/>
            <person name="Peterson J.D."/>
            <person name="Durkin A.S."/>
            <person name="Kolonay J.F."/>
            <person name="Yang F."/>
            <person name="Holt I.E."/>
            <person name="Umayam L.A."/>
            <person name="Mason T.M."/>
            <person name="Brenner M."/>
            <person name="Shea T.P."/>
            <person name="Parksey D.S."/>
            <person name="Nierman W.C."/>
            <person name="Feldblyum T.V."/>
            <person name="Hansen C.L."/>
            <person name="Craven M.B."/>
            <person name="Radune D."/>
            <person name="Vamathevan J.J."/>
            <person name="Khouri H.M."/>
            <person name="White O."/>
            <person name="Gruber T.M."/>
            <person name="Ketchum K.A."/>
            <person name="Venter J.C."/>
            <person name="Tettelin H."/>
            <person name="Bryant D.A."/>
            <person name="Fraser C.M."/>
        </authorList>
    </citation>
    <scope>NUCLEOTIDE SEQUENCE [LARGE SCALE GENOMIC DNA]</scope>
    <source>
        <strain>ATCC 49652 / DSM 12025 / NBRC 103806 / TLS</strain>
    </source>
</reference>
<keyword id="KW-0378">Hydrolase</keyword>
<keyword id="KW-0460">Magnesium</keyword>
<keyword id="KW-0479">Metal-binding</keyword>
<keyword id="KW-1185">Reference proteome</keyword>
<gene>
    <name type="ordered locus">CT1214</name>
</gene>